<gene>
    <name type="primary">GABRG2</name>
</gene>
<organism>
    <name type="scientific">Bos taurus</name>
    <name type="common">Bovine</name>
    <dbReference type="NCBI Taxonomy" id="9913"/>
    <lineage>
        <taxon>Eukaryota</taxon>
        <taxon>Metazoa</taxon>
        <taxon>Chordata</taxon>
        <taxon>Craniata</taxon>
        <taxon>Vertebrata</taxon>
        <taxon>Euteleostomi</taxon>
        <taxon>Mammalia</taxon>
        <taxon>Eutheria</taxon>
        <taxon>Laurasiatheria</taxon>
        <taxon>Artiodactyla</taxon>
        <taxon>Ruminantia</taxon>
        <taxon>Pecora</taxon>
        <taxon>Bovidae</taxon>
        <taxon>Bovinae</taxon>
        <taxon>Bos</taxon>
    </lineage>
</organism>
<accession>P22300</accession>
<protein>
    <recommendedName>
        <fullName evidence="2">Gamma-aminobutyric acid receptor subunit gamma-2</fullName>
    </recommendedName>
    <alternativeName>
        <fullName evidence="2">GABA(A) receptor subunit gamma-2</fullName>
        <shortName evidence="2">GABAAR subunit gamma-2</shortName>
    </alternativeName>
</protein>
<reference key="1">
    <citation type="journal article" date="1990" name="Proc. Natl. Acad. Sci. U.S.A.">
        <title>Another mechanism for creating diversity in gamma-aminobutyrate type A receptors: RNA splicing directs expression of two forms of gamma 2 phosphorylation site.</title>
        <authorList>
            <person name="Whiting P.J."/>
            <person name="McKernan R.M."/>
            <person name="Iversen L.L."/>
        </authorList>
    </citation>
    <scope>NUCLEOTIDE SEQUENCE [MRNA] (ISOFORMS 2L AND 2S)</scope>
    <source>
        <tissue>Brain cortex</tissue>
    </source>
</reference>
<comment type="function">
    <text evidence="1 2 3 4">Gamma subunit of the heteropentameric ligand-gated chloride channel gated by gamma-aminobutyric acid (GABA), a major inhibitory neurotransmitter in the brain. GABA-gated chloride channels, also named GABA(A) receptors (GABAAR), consist of five subunits arranged around a central pore and contain GABA active binding site(s) located at the alpha and beta subunit interface(s). When activated by GABA, GABAARs selectively allow the flow of chloride anions across the cell membrane down their electrochemical gradient (By similarity). Gamma-2/GABRG2-containing GABAARs are found at both synaptic and extrasynaptic sites (By similarity). Chloride influx into the postsynaptic neuron following GABAAR opening decreases the neuron ability to generate a new action potential, thereby reducing nerve transmission (By similarity). GABAARs containing alpha-1 and beta-2 or -3 subunits exhibit synaptogenic activity; the gamma-2 subunit being necessary but not sufficient to induce rapid synaptic contacts formation (By similarity). Extrasynaptic gamma-2-containing receptors contribute to the tonic GABAergic inhibition (By similarity). GABAARs function also as histamine receptor where histamine binds at the interface of two neighboring beta subunits and potentiates GABA response in a gamma-2 subunit-controlled manner (By similarity).</text>
</comment>
<comment type="catalytic activity">
    <reaction evidence="2">
        <text>chloride(in) = chloride(out)</text>
        <dbReference type="Rhea" id="RHEA:29823"/>
        <dbReference type="ChEBI" id="CHEBI:17996"/>
    </reaction>
</comment>
<comment type="activity regulation">
    <text evidence="2 3 4">Allosterically activated by benzodiazepines (By similarity). Activated by pentobarbital (By similarity). Inhibited by the antagonist bicuculline (By similarity). Inhibited by zinc ions (By similarity). Potentiated by histamine (By similarity).</text>
</comment>
<comment type="subunit">
    <text evidence="2 3 4">Heteropentamer, formed by a combination of alpha (GABRA1-6), beta (GABRB1-3), gamma (GABRG1-3), delta (GABRD), epsilon (GABRE), rho (GABRR1-3), pi (GABRP) and theta (GABRQ) chains, each subunit exhibiting distinct physiological and pharmacological properties (By similarity). Interacts with GABARAP (By similarity). Interacts with KIF21B (By similarity). Identified in a complex of 720 kDa composed of LHFPL4, NLGN2, GABRA1, GABRB2, GABRG2 and GABRB3 (By similarity). Interacts with LHFPL4 (By similarity). Interacts with SHISA7; interaction leads to the regulation of GABA(A) receptor trafficking, channel deactivation kinetics and pharmacology (By similarity).</text>
</comment>
<comment type="subcellular location">
    <subcellularLocation>
        <location evidence="2">Postsynaptic cell membrane</location>
        <topology evidence="2">Multi-pass membrane protein</topology>
    </subcellularLocation>
    <subcellularLocation>
        <location evidence="2">Cell membrane</location>
        <topology evidence="2">Multi-pass membrane protein</topology>
    </subcellularLocation>
    <subcellularLocation>
        <location evidence="4">Cell projection</location>
        <location evidence="4">Dendrite</location>
    </subcellularLocation>
    <subcellularLocation>
        <location evidence="3">Cytoplasmic vesicle membrane</location>
    </subcellularLocation>
</comment>
<comment type="alternative products">
    <event type="alternative splicing"/>
    <isoform>
        <id>P22300-1</id>
        <name>2L</name>
        <sequence type="displayed"/>
    </isoform>
    <isoform>
        <id>P22300-2</id>
        <name>2S</name>
        <sequence type="described" ref="VSP_000090"/>
    </isoform>
</comment>
<comment type="domain">
    <text evidence="4">The extracellular domain contributes to synaptic contact formation.</text>
</comment>
<comment type="domain">
    <text evidence="2">GABAARs subunits share a common topological structure: a peptide sequence made up of a long extracellular N-terminal, four transmembrane domains, intracellular or cytoplasmic domain located between the third and the fourth transmembrane domains.</text>
</comment>
<comment type="PTM">
    <text evidence="4">Palmitoylated by ZDHHC3/GODZ; required for the accumulation of GABA(A) receptors at the postsynaptic membrane of inhibitory GABAergic synapses.</text>
</comment>
<comment type="PTM">
    <text evidence="4">Glycosylated.</text>
</comment>
<comment type="similarity">
    <text evidence="7">Belongs to the ligand-gated ion channel (TC 1.A.9) family. Gamma-aminobutyric acid receptor (TC 1.A.9.5) subfamily. GABRG2 sub-subfamily.</text>
</comment>
<name>GBRG2_BOVIN</name>
<sequence length="475" mass="55265">MSSPNIWSTGSSVYSTPVFSQKMTLWILLLLSLYPGLTRQKSDDDYEDYASNKTWVLTPKVPEGDVTVILNNLLEGYDNKLRPDIGVKPTLIHTDMYVNSIGPVNAINMEYTIDIFFGQTWYDRRLKFNSTIKVLRLNSNMVGKIWIPDTFFRNSKKADAHWITTPNRMLRIWNDGRVLYTLRLTIDAECQLQLHNFPMDEHSCPLEFSSYGYPREEIVYQWKRSSVEVSDTRSWRLYQFSFVGLRNTTEVVKTTSGDYVVMTVYFDLSRRMGYFTIQTYIPCTLIVVLSWVSFWINKDAVPARTSLGITTVLTMTTLSTIARKSLPKVSYVTAMDLFVSVCFIFVFSALVEYGTLHYFVSNRKPSKDKDKKKKNPLLRMFSFKAPTIDIRPRSATIQMNNATHLQERDEEYGYECLDGKDCASFFCCFEDCRTGAWRHGRIHIRIAKMDSYARIFFPTAFCLFNLVYWVSYLYL</sequence>
<feature type="signal peptide" evidence="5">
    <location>
        <begin position="1"/>
        <end position="39"/>
    </location>
</feature>
<feature type="chain" id="PRO_0000000476" description="Gamma-aminobutyric acid receptor subunit gamma-2">
    <location>
        <begin position="40"/>
        <end position="475"/>
    </location>
</feature>
<feature type="topological domain" description="Extracellular" evidence="7">
    <location>
        <begin position="41"/>
        <end position="275"/>
    </location>
</feature>
<feature type="transmembrane region" description="Helical" evidence="2">
    <location>
        <begin position="276"/>
        <end position="296"/>
    </location>
</feature>
<feature type="topological domain" description="Cytoplasmic" evidence="7">
    <location>
        <begin position="297"/>
        <end position="302"/>
    </location>
</feature>
<feature type="transmembrane region" description="Helical" evidence="2">
    <location>
        <begin position="303"/>
        <end position="322"/>
    </location>
</feature>
<feature type="topological domain" description="Extracellular" evidence="7">
    <location>
        <begin position="323"/>
        <end position="334"/>
    </location>
</feature>
<feature type="transmembrane region" description="Helical" evidence="2">
    <location>
        <begin position="335"/>
        <end position="359"/>
    </location>
</feature>
<feature type="topological domain" description="Cytoplasmic" evidence="7">
    <location>
        <begin position="360"/>
        <end position="451"/>
    </location>
</feature>
<feature type="transmembrane region" description="Helical" evidence="2">
    <location>
        <begin position="452"/>
        <end position="472"/>
    </location>
</feature>
<feature type="topological domain" description="Extracellular" evidence="7">
    <location>
        <begin position="473"/>
        <end position="475"/>
    </location>
</feature>
<feature type="modified residue" description="Phosphoserine; by PKC" evidence="7">
    <location>
        <position position="382"/>
    </location>
</feature>
<feature type="glycosylation site" description="N-linked (GlcNAc...) asparagine" evidence="5">
    <location>
        <position position="52"/>
    </location>
</feature>
<feature type="glycosylation site" description="N-linked (GlcNAc...) asparagine" evidence="5">
    <location>
        <position position="129"/>
    </location>
</feature>
<feature type="glycosylation site" description="N-linked (GlcNAc...) asparagine" evidence="5">
    <location>
        <position position="247"/>
    </location>
</feature>
<feature type="disulfide bond" evidence="2">
    <location>
        <begin position="190"/>
        <end position="204"/>
    </location>
</feature>
<feature type="splice variant" id="VSP_000090" description="In isoform 2S." evidence="6">
    <location>
        <begin position="377"/>
        <end position="384"/>
    </location>
</feature>
<feature type="sequence variant">
    <original>S</original>
    <variation>G</variation>
    <location>
        <position position="230"/>
    </location>
</feature>
<dbReference type="EMBL" id="M55563">
    <property type="protein sequence ID" value="AAA30531.1"/>
    <property type="molecule type" value="mRNA"/>
</dbReference>
<dbReference type="PIR" id="B39272">
    <property type="entry name" value="B39272"/>
</dbReference>
<dbReference type="RefSeq" id="NP_776970.1">
    <molecule id="P22300-1"/>
    <property type="nucleotide sequence ID" value="NM_174545.1"/>
</dbReference>
<dbReference type="SMR" id="P22300"/>
<dbReference type="FunCoup" id="P22300">
    <property type="interactions" value="220"/>
</dbReference>
<dbReference type="STRING" id="9913.ENSBTAP00000013543"/>
<dbReference type="ChEMBL" id="CHEMBL2094107"/>
<dbReference type="DrugCentral" id="P22300"/>
<dbReference type="GlyCosmos" id="P22300">
    <property type="glycosylation" value="3 sites, No reported glycans"/>
</dbReference>
<dbReference type="GlyGen" id="P22300">
    <property type="glycosylation" value="3 sites"/>
</dbReference>
<dbReference type="iPTMnet" id="P22300"/>
<dbReference type="PaxDb" id="9913-ENSBTAP00000013543"/>
<dbReference type="GeneID" id="282240"/>
<dbReference type="KEGG" id="bta:282240"/>
<dbReference type="CTD" id="2566"/>
<dbReference type="eggNOG" id="KOG3642">
    <property type="taxonomic scope" value="Eukaryota"/>
</dbReference>
<dbReference type="InParanoid" id="P22300"/>
<dbReference type="OrthoDB" id="203862at2759"/>
<dbReference type="Proteomes" id="UP000009136">
    <property type="component" value="Unplaced"/>
</dbReference>
<dbReference type="GO" id="GO:0034707">
    <property type="term" value="C:chloride channel complex"/>
    <property type="evidence" value="ECO:0007669"/>
    <property type="project" value="UniProtKB-KW"/>
</dbReference>
<dbReference type="GO" id="GO:0030659">
    <property type="term" value="C:cytoplasmic vesicle membrane"/>
    <property type="evidence" value="ECO:0007669"/>
    <property type="project" value="UniProtKB-SubCell"/>
</dbReference>
<dbReference type="GO" id="GO:0032590">
    <property type="term" value="C:dendrite membrane"/>
    <property type="evidence" value="ECO:0000318"/>
    <property type="project" value="GO_Central"/>
</dbReference>
<dbReference type="GO" id="GO:1902711">
    <property type="term" value="C:GABA-A receptor complex"/>
    <property type="evidence" value="ECO:0000250"/>
    <property type="project" value="UniProtKB"/>
</dbReference>
<dbReference type="GO" id="GO:0005886">
    <property type="term" value="C:plasma membrane"/>
    <property type="evidence" value="ECO:0000250"/>
    <property type="project" value="UniProtKB"/>
</dbReference>
<dbReference type="GO" id="GO:0098794">
    <property type="term" value="C:postsynapse"/>
    <property type="evidence" value="ECO:0000318"/>
    <property type="project" value="GO_Central"/>
</dbReference>
<dbReference type="GO" id="GO:0099634">
    <property type="term" value="C:postsynaptic specialization membrane"/>
    <property type="evidence" value="ECO:0000250"/>
    <property type="project" value="UniProtKB"/>
</dbReference>
<dbReference type="GO" id="GO:0005254">
    <property type="term" value="F:chloride channel activity"/>
    <property type="evidence" value="ECO:0000250"/>
    <property type="project" value="UniProtKB"/>
</dbReference>
<dbReference type="GO" id="GO:0004890">
    <property type="term" value="F:GABA-A receptor activity"/>
    <property type="evidence" value="ECO:0000250"/>
    <property type="project" value="UniProtKB"/>
</dbReference>
<dbReference type="GO" id="GO:0022851">
    <property type="term" value="F:GABA-gated chloride ion channel activity"/>
    <property type="evidence" value="ECO:0000250"/>
    <property type="project" value="UniProtKB"/>
</dbReference>
<dbReference type="GO" id="GO:0071420">
    <property type="term" value="P:cellular response to histamine"/>
    <property type="evidence" value="ECO:0000250"/>
    <property type="project" value="UniProtKB"/>
</dbReference>
<dbReference type="GO" id="GO:1902476">
    <property type="term" value="P:chloride transmembrane transport"/>
    <property type="evidence" value="ECO:0000250"/>
    <property type="project" value="UniProtKB"/>
</dbReference>
<dbReference type="GO" id="GO:0007214">
    <property type="term" value="P:gamma-aminobutyric acid signaling pathway"/>
    <property type="evidence" value="ECO:0000318"/>
    <property type="project" value="GO_Central"/>
</dbReference>
<dbReference type="GO" id="GO:1904862">
    <property type="term" value="P:inhibitory synapse assembly"/>
    <property type="evidence" value="ECO:0000250"/>
    <property type="project" value="UniProtKB"/>
</dbReference>
<dbReference type="GO" id="GO:0051932">
    <property type="term" value="P:synaptic transmission, GABAergic"/>
    <property type="evidence" value="ECO:0000318"/>
    <property type="project" value="GO_Central"/>
</dbReference>
<dbReference type="CDD" id="cd19000">
    <property type="entry name" value="LGIC_ECD_GABAAR_G"/>
    <property type="match status" value="1"/>
</dbReference>
<dbReference type="CDD" id="cd19054">
    <property type="entry name" value="LGIC_TM_GABAAR_gamma"/>
    <property type="match status" value="1"/>
</dbReference>
<dbReference type="FunFam" id="2.70.170.10:FF:000003">
    <property type="entry name" value="Putative gamma-aminobutyric acid receptor subunit gamma-2"/>
    <property type="match status" value="1"/>
</dbReference>
<dbReference type="Gene3D" id="2.70.170.10">
    <property type="entry name" value="Neurotransmitter-gated ion-channel ligand-binding domain"/>
    <property type="match status" value="1"/>
</dbReference>
<dbReference type="Gene3D" id="1.20.58.390">
    <property type="entry name" value="Neurotransmitter-gated ion-channel transmembrane domain"/>
    <property type="match status" value="1"/>
</dbReference>
<dbReference type="InterPro" id="IPR006028">
    <property type="entry name" value="GABAA/Glycine_rcpt"/>
</dbReference>
<dbReference type="InterPro" id="IPR005439">
    <property type="entry name" value="GABBAg2_rcpt"/>
</dbReference>
<dbReference type="InterPro" id="IPR005437">
    <property type="entry name" value="GABRG-1/4"/>
</dbReference>
<dbReference type="InterPro" id="IPR006202">
    <property type="entry name" value="Neur_chan_lig-bd"/>
</dbReference>
<dbReference type="InterPro" id="IPR036734">
    <property type="entry name" value="Neur_chan_lig-bd_sf"/>
</dbReference>
<dbReference type="InterPro" id="IPR006201">
    <property type="entry name" value="Neur_channel"/>
</dbReference>
<dbReference type="InterPro" id="IPR036719">
    <property type="entry name" value="Neuro-gated_channel_TM_sf"/>
</dbReference>
<dbReference type="InterPro" id="IPR038050">
    <property type="entry name" value="Neuro_actylchol_rec"/>
</dbReference>
<dbReference type="InterPro" id="IPR006029">
    <property type="entry name" value="Neurotrans-gated_channel_TM"/>
</dbReference>
<dbReference type="InterPro" id="IPR018000">
    <property type="entry name" value="Neurotransmitter_ion_chnl_CS"/>
</dbReference>
<dbReference type="NCBIfam" id="TIGR00860">
    <property type="entry name" value="LIC"/>
    <property type="match status" value="1"/>
</dbReference>
<dbReference type="PANTHER" id="PTHR18945">
    <property type="entry name" value="NEUROTRANSMITTER GATED ION CHANNEL"/>
    <property type="match status" value="1"/>
</dbReference>
<dbReference type="Pfam" id="PF02931">
    <property type="entry name" value="Neur_chan_LBD"/>
    <property type="match status" value="1"/>
</dbReference>
<dbReference type="Pfam" id="PF02932">
    <property type="entry name" value="Neur_chan_memb"/>
    <property type="match status" value="1"/>
</dbReference>
<dbReference type="PRINTS" id="PR00253">
    <property type="entry name" value="GABAARECEPTR"/>
</dbReference>
<dbReference type="PRINTS" id="PR01620">
    <property type="entry name" value="GABAARGAMMA"/>
</dbReference>
<dbReference type="PRINTS" id="PR01622">
    <property type="entry name" value="GABAARGAMMA2"/>
</dbReference>
<dbReference type="PRINTS" id="PR00252">
    <property type="entry name" value="NRIONCHANNEL"/>
</dbReference>
<dbReference type="SUPFAM" id="SSF90112">
    <property type="entry name" value="Neurotransmitter-gated ion-channel transmembrane pore"/>
    <property type="match status" value="1"/>
</dbReference>
<dbReference type="SUPFAM" id="SSF63712">
    <property type="entry name" value="Nicotinic receptor ligand binding domain-like"/>
    <property type="match status" value="1"/>
</dbReference>
<dbReference type="PROSITE" id="PS00236">
    <property type="entry name" value="NEUROTR_ION_CHANNEL"/>
    <property type="match status" value="1"/>
</dbReference>
<proteinExistence type="evidence at transcript level"/>
<evidence type="ECO:0000250" key="1">
    <source>
        <dbReference type="UniProtKB" id="P08219"/>
    </source>
</evidence>
<evidence type="ECO:0000250" key="2">
    <source>
        <dbReference type="UniProtKB" id="P18507"/>
    </source>
</evidence>
<evidence type="ECO:0000250" key="3">
    <source>
        <dbReference type="UniProtKB" id="P18508"/>
    </source>
</evidence>
<evidence type="ECO:0000250" key="4">
    <source>
        <dbReference type="UniProtKB" id="P22723"/>
    </source>
</evidence>
<evidence type="ECO:0000255" key="5"/>
<evidence type="ECO:0000303" key="6">
    <source>
    </source>
</evidence>
<evidence type="ECO:0000305" key="7"/>
<keyword id="KW-0025">Alternative splicing</keyword>
<keyword id="KW-1003">Cell membrane</keyword>
<keyword id="KW-0966">Cell projection</keyword>
<keyword id="KW-0868">Chloride</keyword>
<keyword id="KW-0869">Chloride channel</keyword>
<keyword id="KW-0968">Cytoplasmic vesicle</keyword>
<keyword id="KW-1015">Disulfide bond</keyword>
<keyword id="KW-0325">Glycoprotein</keyword>
<keyword id="KW-0407">Ion channel</keyword>
<keyword id="KW-0406">Ion transport</keyword>
<keyword id="KW-0449">Lipoprotein</keyword>
<keyword id="KW-0472">Membrane</keyword>
<keyword id="KW-0564">Palmitate</keyword>
<keyword id="KW-0597">Phosphoprotein</keyword>
<keyword id="KW-0628">Postsynaptic cell membrane</keyword>
<keyword id="KW-1185">Reference proteome</keyword>
<keyword id="KW-0732">Signal</keyword>
<keyword id="KW-0770">Synapse</keyword>
<keyword id="KW-0812">Transmembrane</keyword>
<keyword id="KW-1133">Transmembrane helix</keyword>
<keyword id="KW-0813">Transport</keyword>